<keyword id="KW-0175">Coiled coil</keyword>
<keyword id="KW-0963">Cytoplasm</keyword>
<keyword id="KW-0597">Phosphoprotein</keyword>
<keyword id="KW-1185">Reference proteome</keyword>
<keyword id="KW-0677">Repeat</keyword>
<keyword id="KW-0802">TPR repeat</keyword>
<proteinExistence type="evidence at protein level"/>
<sequence>MAFTMQTGDLKKLKYFIDFALENPTFLNMPQLQFVKDFVEKFGGTVPPGQFNGGSAGGKCPFGGVAGAKANEPANAPEDSEDEKSLSDPESDVELDMEGVIEADSDPAQPMGNYSKKATEEEVEQASELRAQAASAYGQQKFDEAIALYTKAIELSPGNALFHAKRGQAFLKLKKPNACIRDCDVALELNSDLAAGYKFRGRARRLLGDFELAAHDLRQACKLDFDEETDEWLKEVTPNAKKIEQHRLKQERRQAERKIKERQRDQRRARKEQEKHNASSGGSSGEFSGGNPGNGNMSDILGAMSDPEVSAAIQDILSNPGNITKYASNPKIYNLIKKIVPGGDVGAAFGQAGEKAGKPSEPKPKKDSADFVDDGLD</sequence>
<gene>
    <name evidence="8" type="primary">HIP-R</name>
    <name type="ORF">CG2947</name>
</gene>
<protein>
    <recommendedName>
        <fullName evidence="1 14">Hsc70-interacting protein 2</fullName>
    </recommendedName>
    <alternativeName>
        <fullName evidence="8">HIP-replacement</fullName>
    </alternativeName>
</protein>
<feature type="chain" id="PRO_0000393585" description="Hsc70-interacting protein 2">
    <location>
        <begin position="1"/>
        <end position="377"/>
    </location>
</feature>
<feature type="repeat" description="TPR 1" evidence="2">
    <location>
        <begin position="126"/>
        <end position="159"/>
    </location>
</feature>
<feature type="repeat" description="TPR 2" evidence="2">
    <location>
        <begin position="161"/>
        <end position="193"/>
    </location>
</feature>
<feature type="repeat" description="TPR 3" evidence="2">
    <location>
        <begin position="195"/>
        <end position="227"/>
    </location>
</feature>
<feature type="domain" description="STI1" evidence="2">
    <location>
        <begin position="294"/>
        <end position="336"/>
    </location>
</feature>
<feature type="region of interest" description="Disordered" evidence="3">
    <location>
        <begin position="68"/>
        <end position="123"/>
    </location>
</feature>
<feature type="region of interest" description="Disordered" evidence="3">
    <location>
        <begin position="243"/>
        <end position="302"/>
    </location>
</feature>
<feature type="region of interest" description="Disordered" evidence="3">
    <location>
        <begin position="344"/>
        <end position="377"/>
    </location>
</feature>
<feature type="coiled-coil region" evidence="2">
    <location>
        <begin position="239"/>
        <end position="276"/>
    </location>
</feature>
<feature type="compositionally biased region" description="Acidic residues" evidence="3">
    <location>
        <begin position="89"/>
        <end position="105"/>
    </location>
</feature>
<feature type="compositionally biased region" description="Basic and acidic residues" evidence="3">
    <location>
        <begin position="243"/>
        <end position="277"/>
    </location>
</feature>
<feature type="compositionally biased region" description="Gly residues" evidence="3">
    <location>
        <begin position="282"/>
        <end position="293"/>
    </location>
</feature>
<feature type="compositionally biased region" description="Basic and acidic residues" evidence="3">
    <location>
        <begin position="355"/>
        <end position="369"/>
    </location>
</feature>
<feature type="modified residue" description="Phosphoserine" evidence="5">
    <location>
        <position position="80"/>
    </location>
</feature>
<feature type="sequence variant" description="In strain: XCPA69 and XCPA112." evidence="6 7">
    <original>S</original>
    <variation>N</variation>
    <location>
        <position position="105"/>
    </location>
</feature>
<feature type="sequence variant" description="In strain: XCPA4, XCPA7, XCPA25, XCPA51, XCPA77, XCPA93, XCPA102, XCPA105, XCPA122 and XCPA125." evidence="6 7">
    <original>G</original>
    <variation>A</variation>
    <location>
        <position position="290"/>
    </location>
</feature>
<dbReference type="EMBL" id="FJ686062">
    <property type="protein sequence ID" value="ACN78889.1"/>
    <property type="molecule type" value="Genomic_DNA"/>
</dbReference>
<dbReference type="EMBL" id="FJ686063">
    <property type="protein sequence ID" value="ACN78890.1"/>
    <property type="molecule type" value="Genomic_DNA"/>
</dbReference>
<dbReference type="EMBL" id="FJ686064">
    <property type="protein sequence ID" value="ACN78891.1"/>
    <property type="molecule type" value="Genomic_DNA"/>
</dbReference>
<dbReference type="EMBL" id="FJ686065">
    <property type="protein sequence ID" value="ACN78892.1"/>
    <property type="molecule type" value="Genomic_DNA"/>
</dbReference>
<dbReference type="EMBL" id="FJ686066">
    <property type="protein sequence ID" value="ACN78893.1"/>
    <property type="molecule type" value="Genomic_DNA"/>
</dbReference>
<dbReference type="EMBL" id="FJ686067">
    <property type="protein sequence ID" value="ACN78894.1"/>
    <property type="molecule type" value="Genomic_DNA"/>
</dbReference>
<dbReference type="EMBL" id="FJ686068">
    <property type="protein sequence ID" value="ACN78895.1"/>
    <property type="molecule type" value="Genomic_DNA"/>
</dbReference>
<dbReference type="EMBL" id="FJ686069">
    <property type="protein sequence ID" value="ACN78896.1"/>
    <property type="molecule type" value="Genomic_DNA"/>
</dbReference>
<dbReference type="EMBL" id="AE014298">
    <property type="protein sequence ID" value="AAN09105.1"/>
    <property type="molecule type" value="Genomic_DNA"/>
</dbReference>
<dbReference type="EMBL" id="AY051998">
    <property type="protein sequence ID" value="AAK93422.1"/>
    <property type="molecule type" value="mRNA"/>
</dbReference>
<dbReference type="EMBL" id="AY274369">
    <property type="protein sequence ID" value="AAP31292.1"/>
    <property type="molecule type" value="Genomic_DNA"/>
</dbReference>
<dbReference type="EMBL" id="AY274370">
    <property type="protein sequence ID" value="AAP31293.1"/>
    <property type="molecule type" value="Genomic_DNA"/>
</dbReference>
<dbReference type="EMBL" id="AY274371">
    <property type="protein sequence ID" value="AAP31294.1"/>
    <property type="molecule type" value="Genomic_DNA"/>
</dbReference>
<dbReference type="EMBL" id="AY274372">
    <property type="protein sequence ID" value="AAP31295.1"/>
    <property type="molecule type" value="Genomic_DNA"/>
</dbReference>
<dbReference type="EMBL" id="AY274373">
    <property type="protein sequence ID" value="AAP31296.1"/>
    <property type="molecule type" value="Genomic_DNA"/>
</dbReference>
<dbReference type="EMBL" id="AY274374">
    <property type="protein sequence ID" value="AAP31297.1"/>
    <property type="molecule type" value="Genomic_DNA"/>
</dbReference>
<dbReference type="EMBL" id="AY274375">
    <property type="protein sequence ID" value="AAP31298.1"/>
    <property type="molecule type" value="Genomic_DNA"/>
</dbReference>
<dbReference type="EMBL" id="AY274376">
    <property type="protein sequence ID" value="AAP31299.1"/>
    <property type="molecule type" value="Genomic_DNA"/>
</dbReference>
<dbReference type="EMBL" id="AY274377">
    <property type="protein sequence ID" value="AAP31300.1"/>
    <property type="molecule type" value="Genomic_DNA"/>
</dbReference>
<dbReference type="EMBL" id="AY274378">
    <property type="protein sequence ID" value="AAP31301.1"/>
    <property type="molecule type" value="Genomic_DNA"/>
</dbReference>
<dbReference type="EMBL" id="AY274379">
    <property type="protein sequence ID" value="AAP31302.1"/>
    <property type="molecule type" value="Genomic_DNA"/>
</dbReference>
<dbReference type="EMBL" id="AY274380">
    <property type="protein sequence ID" value="AAP31303.1"/>
    <property type="molecule type" value="Genomic_DNA"/>
</dbReference>
<dbReference type="RefSeq" id="NP_001014719.2">
    <property type="nucleotide sequence ID" value="NM_001014719.2"/>
</dbReference>
<dbReference type="RefSeq" id="NP_726885.1">
    <property type="nucleotide sequence ID" value="NM_166988.4"/>
</dbReference>
<dbReference type="RefSeq" id="NP_726886.1">
    <property type="nucleotide sequence ID" value="NM_166989.5"/>
</dbReference>
<dbReference type="SMR" id="Q86DS1"/>
<dbReference type="BioGRID" id="57855">
    <property type="interactions" value="51"/>
</dbReference>
<dbReference type="BioGRID" id="76808">
    <property type="interactions" value="2"/>
</dbReference>
<dbReference type="FunCoup" id="Q86DS1">
    <property type="interactions" value="1762"/>
</dbReference>
<dbReference type="IntAct" id="Q86DS1">
    <property type="interactions" value="2"/>
</dbReference>
<dbReference type="iPTMnet" id="Q86DS1"/>
<dbReference type="DNASU" id="31335"/>
<dbReference type="DNASU" id="318211"/>
<dbReference type="EnsemblMetazoa" id="FBtr0070597">
    <property type="protein sequence ID" value="FBpp0070572"/>
    <property type="gene ID" value="FBgn0029676"/>
</dbReference>
<dbReference type="EnsemblMetazoa" id="FBtr0070598">
    <property type="protein sequence ID" value="FBpp0070573"/>
    <property type="gene ID" value="FBgn0029676"/>
</dbReference>
<dbReference type="EnsemblMetazoa" id="FBtr0070600">
    <property type="protein sequence ID" value="FBpp0070575"/>
    <property type="gene ID" value="FBgn0260484"/>
</dbReference>
<dbReference type="EnsemblMetazoa" id="FBtr0333764">
    <property type="protein sequence ID" value="FBpp0305905"/>
    <property type="gene ID" value="FBgn0029676"/>
</dbReference>
<dbReference type="GeneID" id="31335"/>
<dbReference type="KEGG" id="dme:Dmel_CG2947"/>
<dbReference type="KEGG" id="dme:Dmel_CG32789"/>
<dbReference type="UCSC" id="CG2947-RA">
    <property type="organism name" value="d. melanogaster"/>
</dbReference>
<dbReference type="AGR" id="FB:FBgn0029676"/>
<dbReference type="CTD" id="31335"/>
<dbReference type="CTD" id="318211"/>
<dbReference type="FlyBase" id="FBgn0029676">
    <property type="gene designation" value="HIP-R"/>
</dbReference>
<dbReference type="VEuPathDB" id="VectorBase:FBgn0029676"/>
<dbReference type="VEuPathDB" id="VectorBase:FBgn0260484"/>
<dbReference type="GeneTree" id="ENSGT00390000001347"/>
<dbReference type="HOGENOM" id="CLU_026202_0_1_1"/>
<dbReference type="InParanoid" id="Q86DS1"/>
<dbReference type="OMA" id="YEKRRYK"/>
<dbReference type="OrthoDB" id="533763at2759"/>
<dbReference type="PhylomeDB" id="Q86DS1"/>
<dbReference type="SignaLink" id="Q86DS1"/>
<dbReference type="PRO" id="PR:Q86DS1"/>
<dbReference type="Proteomes" id="UP000000803">
    <property type="component" value="Chromosome X"/>
</dbReference>
<dbReference type="Bgee" id="FBgn0029676">
    <property type="expression patterns" value="Expressed in T neuron T5d (Drosophila) in embryonic/larval optic lobe (Drosophila) and 185 other cell types or tissues"/>
</dbReference>
<dbReference type="ExpressionAtlas" id="Q86DS1">
    <property type="expression patterns" value="baseline and differential"/>
</dbReference>
<dbReference type="GO" id="GO:0005829">
    <property type="term" value="C:cytosol"/>
    <property type="evidence" value="ECO:0000250"/>
    <property type="project" value="FlyBase"/>
</dbReference>
<dbReference type="GO" id="GO:0032991">
    <property type="term" value="C:protein-containing complex"/>
    <property type="evidence" value="ECO:0000250"/>
    <property type="project" value="UniProtKB"/>
</dbReference>
<dbReference type="GO" id="GO:0031072">
    <property type="term" value="F:heat shock protein binding"/>
    <property type="evidence" value="ECO:0000250"/>
    <property type="project" value="FlyBase"/>
</dbReference>
<dbReference type="GO" id="GO:0030544">
    <property type="term" value="F:Hsp70 protein binding"/>
    <property type="evidence" value="ECO:0000250"/>
    <property type="project" value="UniProtKB"/>
</dbReference>
<dbReference type="GO" id="GO:0046983">
    <property type="term" value="F:protein dimerization activity"/>
    <property type="evidence" value="ECO:0007669"/>
    <property type="project" value="InterPro"/>
</dbReference>
<dbReference type="GO" id="GO:0051087">
    <property type="term" value="F:protein-folding chaperone binding"/>
    <property type="evidence" value="ECO:0000250"/>
    <property type="project" value="FlyBase"/>
</dbReference>
<dbReference type="GO" id="GO:0051085">
    <property type="term" value="P:chaperone cofactor-dependent protein refolding"/>
    <property type="evidence" value="ECO:0000250"/>
    <property type="project" value="UniProtKB"/>
</dbReference>
<dbReference type="CDD" id="cd14438">
    <property type="entry name" value="Hip_N"/>
    <property type="match status" value="1"/>
</dbReference>
<dbReference type="FunFam" id="1.25.40.10:FF:000112">
    <property type="entry name" value="FAM10 family protein"/>
    <property type="match status" value="1"/>
</dbReference>
<dbReference type="FunFam" id="6.10.250.3420:FF:000001">
    <property type="entry name" value="Hsc70-interacting protein-like protein"/>
    <property type="match status" value="1"/>
</dbReference>
<dbReference type="Gene3D" id="1.10.260.100">
    <property type="match status" value="1"/>
</dbReference>
<dbReference type="Gene3D" id="6.10.250.3420">
    <property type="match status" value="1"/>
</dbReference>
<dbReference type="Gene3D" id="1.25.40.10">
    <property type="entry name" value="Tetratricopeptide repeat domain"/>
    <property type="match status" value="1"/>
</dbReference>
<dbReference type="InterPro" id="IPR034649">
    <property type="entry name" value="Hip_N"/>
</dbReference>
<dbReference type="InterPro" id="IPR006636">
    <property type="entry name" value="STI1_HS-bd"/>
</dbReference>
<dbReference type="InterPro" id="IPR011990">
    <property type="entry name" value="TPR-like_helical_dom_sf"/>
</dbReference>
<dbReference type="InterPro" id="IPR019734">
    <property type="entry name" value="TPR_rpt"/>
</dbReference>
<dbReference type="PANTHER" id="PTHR45883">
    <property type="entry name" value="HSC70-INTERACTING PROTEIN"/>
    <property type="match status" value="1"/>
</dbReference>
<dbReference type="PANTHER" id="PTHR45883:SF2">
    <property type="entry name" value="HSC70-INTERACTING PROTEIN"/>
    <property type="match status" value="1"/>
</dbReference>
<dbReference type="Pfam" id="PF18253">
    <property type="entry name" value="HipN"/>
    <property type="match status" value="1"/>
</dbReference>
<dbReference type="Pfam" id="PF13414">
    <property type="entry name" value="TPR_11"/>
    <property type="match status" value="1"/>
</dbReference>
<dbReference type="SMART" id="SM00727">
    <property type="entry name" value="STI1"/>
    <property type="match status" value="1"/>
</dbReference>
<dbReference type="SMART" id="SM00028">
    <property type="entry name" value="TPR"/>
    <property type="match status" value="3"/>
</dbReference>
<dbReference type="SUPFAM" id="SSF48452">
    <property type="entry name" value="TPR-like"/>
    <property type="match status" value="1"/>
</dbReference>
<dbReference type="PROSITE" id="PS50005">
    <property type="entry name" value="TPR"/>
    <property type="match status" value="2"/>
</dbReference>
<dbReference type="PROSITE" id="PS50293">
    <property type="entry name" value="TPR_REGION"/>
    <property type="match status" value="1"/>
</dbReference>
<organism>
    <name type="scientific">Drosophila melanogaster</name>
    <name type="common">Fruit fly</name>
    <dbReference type="NCBI Taxonomy" id="7227"/>
    <lineage>
        <taxon>Eukaryota</taxon>
        <taxon>Metazoa</taxon>
        <taxon>Ecdysozoa</taxon>
        <taxon>Arthropoda</taxon>
        <taxon>Hexapoda</taxon>
        <taxon>Insecta</taxon>
        <taxon>Pterygota</taxon>
        <taxon>Neoptera</taxon>
        <taxon>Endopterygota</taxon>
        <taxon>Diptera</taxon>
        <taxon>Brachycera</taxon>
        <taxon>Muscomorpha</taxon>
        <taxon>Ephydroidea</taxon>
        <taxon>Drosophilidae</taxon>
        <taxon>Drosophila</taxon>
        <taxon>Sophophora</taxon>
    </lineage>
</organism>
<reference evidence="9 25" key="1">
    <citation type="journal article" date="2009" name="J. Mol. Evol.">
        <title>Duplicate gene evolution toward multiple fates at the Drosophila melanogaster HIP/HIP-Replacement locus.</title>
        <authorList>
            <person name="Hogan C.C."/>
            <person name="Bettencourt B.R."/>
        </authorList>
    </citation>
    <scope>NUCLEOTIDE SEQUENCE [GENOMIC DNA]</scope>
    <scope>VARIANTS ASN-105 AND ALA-290</scope>
    <source>
        <strain evidence="30">XCPA112</strain>
        <strain evidence="27">XCPA126</strain>
        <strain evidence="24">XCPA25</strain>
        <strain evidence="25">XCPA42</strain>
        <strain evidence="26">XCPA53</strain>
        <strain evidence="28">XCPA69</strain>
        <strain evidence="29">XCPA77</strain>
        <strain evidence="31">XCPA93</strain>
    </source>
</reference>
<reference evidence="11" key="2">
    <citation type="journal article" date="2000" name="Science">
        <title>The genome sequence of Drosophila melanogaster.</title>
        <authorList>
            <person name="Adams M.D."/>
            <person name="Celniker S.E."/>
            <person name="Holt R.A."/>
            <person name="Evans C.A."/>
            <person name="Gocayne J.D."/>
            <person name="Amanatides P.G."/>
            <person name="Scherer S.E."/>
            <person name="Li P.W."/>
            <person name="Hoskins R.A."/>
            <person name="Galle R.F."/>
            <person name="George R.A."/>
            <person name="Lewis S.E."/>
            <person name="Richards S."/>
            <person name="Ashburner M."/>
            <person name="Henderson S.N."/>
            <person name="Sutton G.G."/>
            <person name="Wortman J.R."/>
            <person name="Yandell M.D."/>
            <person name="Zhang Q."/>
            <person name="Chen L.X."/>
            <person name="Brandon R.C."/>
            <person name="Rogers Y.-H.C."/>
            <person name="Blazej R.G."/>
            <person name="Champe M."/>
            <person name="Pfeiffer B.D."/>
            <person name="Wan K.H."/>
            <person name="Doyle C."/>
            <person name="Baxter E.G."/>
            <person name="Helt G."/>
            <person name="Nelson C.R."/>
            <person name="Miklos G.L.G."/>
            <person name="Abril J.F."/>
            <person name="Agbayani A."/>
            <person name="An H.-J."/>
            <person name="Andrews-Pfannkoch C."/>
            <person name="Baldwin D."/>
            <person name="Ballew R.M."/>
            <person name="Basu A."/>
            <person name="Baxendale J."/>
            <person name="Bayraktaroglu L."/>
            <person name="Beasley E.M."/>
            <person name="Beeson K.Y."/>
            <person name="Benos P.V."/>
            <person name="Berman B.P."/>
            <person name="Bhandari D."/>
            <person name="Bolshakov S."/>
            <person name="Borkova D."/>
            <person name="Botchan M.R."/>
            <person name="Bouck J."/>
            <person name="Brokstein P."/>
            <person name="Brottier P."/>
            <person name="Burtis K.C."/>
            <person name="Busam D.A."/>
            <person name="Butler H."/>
            <person name="Cadieu E."/>
            <person name="Center A."/>
            <person name="Chandra I."/>
            <person name="Cherry J.M."/>
            <person name="Cawley S."/>
            <person name="Dahlke C."/>
            <person name="Davenport L.B."/>
            <person name="Davies P."/>
            <person name="de Pablos B."/>
            <person name="Delcher A."/>
            <person name="Deng Z."/>
            <person name="Mays A.D."/>
            <person name="Dew I."/>
            <person name="Dietz S.M."/>
            <person name="Dodson K."/>
            <person name="Doup L.E."/>
            <person name="Downes M."/>
            <person name="Dugan-Rocha S."/>
            <person name="Dunkov B.C."/>
            <person name="Dunn P."/>
            <person name="Durbin K.J."/>
            <person name="Evangelista C.C."/>
            <person name="Ferraz C."/>
            <person name="Ferriera S."/>
            <person name="Fleischmann W."/>
            <person name="Fosler C."/>
            <person name="Gabrielian A.E."/>
            <person name="Garg N.S."/>
            <person name="Gelbart W.M."/>
            <person name="Glasser K."/>
            <person name="Glodek A."/>
            <person name="Gong F."/>
            <person name="Gorrell J.H."/>
            <person name="Gu Z."/>
            <person name="Guan P."/>
            <person name="Harris M."/>
            <person name="Harris N.L."/>
            <person name="Harvey D.A."/>
            <person name="Heiman T.J."/>
            <person name="Hernandez J.R."/>
            <person name="Houck J."/>
            <person name="Hostin D."/>
            <person name="Houston K.A."/>
            <person name="Howland T.J."/>
            <person name="Wei M.-H."/>
            <person name="Ibegwam C."/>
            <person name="Jalali M."/>
            <person name="Kalush F."/>
            <person name="Karpen G.H."/>
            <person name="Ke Z."/>
            <person name="Kennison J.A."/>
            <person name="Ketchum K.A."/>
            <person name="Kimmel B.E."/>
            <person name="Kodira C.D."/>
            <person name="Kraft C.L."/>
            <person name="Kravitz S."/>
            <person name="Kulp D."/>
            <person name="Lai Z."/>
            <person name="Lasko P."/>
            <person name="Lei Y."/>
            <person name="Levitsky A.A."/>
            <person name="Li J.H."/>
            <person name="Li Z."/>
            <person name="Liang Y."/>
            <person name="Lin X."/>
            <person name="Liu X."/>
            <person name="Mattei B."/>
            <person name="McIntosh T.C."/>
            <person name="McLeod M.P."/>
            <person name="McPherson D."/>
            <person name="Merkulov G."/>
            <person name="Milshina N.V."/>
            <person name="Mobarry C."/>
            <person name="Morris J."/>
            <person name="Moshrefi A."/>
            <person name="Mount S.M."/>
            <person name="Moy M."/>
            <person name="Murphy B."/>
            <person name="Murphy L."/>
            <person name="Muzny D.M."/>
            <person name="Nelson D.L."/>
            <person name="Nelson D.R."/>
            <person name="Nelson K.A."/>
            <person name="Nixon K."/>
            <person name="Nusskern D.R."/>
            <person name="Pacleb J.M."/>
            <person name="Palazzolo M."/>
            <person name="Pittman G.S."/>
            <person name="Pan S."/>
            <person name="Pollard J."/>
            <person name="Puri V."/>
            <person name="Reese M.G."/>
            <person name="Reinert K."/>
            <person name="Remington K."/>
            <person name="Saunders R.D.C."/>
            <person name="Scheeler F."/>
            <person name="Shen H."/>
            <person name="Shue B.C."/>
            <person name="Siden-Kiamos I."/>
            <person name="Simpson M."/>
            <person name="Skupski M.P."/>
            <person name="Smith T.J."/>
            <person name="Spier E."/>
            <person name="Spradling A.C."/>
            <person name="Stapleton M."/>
            <person name="Strong R."/>
            <person name="Sun E."/>
            <person name="Svirskas R."/>
            <person name="Tector C."/>
            <person name="Turner R."/>
            <person name="Venter E."/>
            <person name="Wang A.H."/>
            <person name="Wang X."/>
            <person name="Wang Z.-Y."/>
            <person name="Wassarman D.A."/>
            <person name="Weinstock G.M."/>
            <person name="Weissenbach J."/>
            <person name="Williams S.M."/>
            <person name="Woodage T."/>
            <person name="Worley K.C."/>
            <person name="Wu D."/>
            <person name="Yang S."/>
            <person name="Yao Q.A."/>
            <person name="Ye J."/>
            <person name="Yeh R.-F."/>
            <person name="Zaveri J.S."/>
            <person name="Zhan M."/>
            <person name="Zhang G."/>
            <person name="Zhao Q."/>
            <person name="Zheng L."/>
            <person name="Zheng X.H."/>
            <person name="Zhong F.N."/>
            <person name="Zhong W."/>
            <person name="Zhou X."/>
            <person name="Zhu S.C."/>
            <person name="Zhu X."/>
            <person name="Smith H.O."/>
            <person name="Gibbs R.A."/>
            <person name="Myers E.W."/>
            <person name="Rubin G.M."/>
            <person name="Venter J.C."/>
        </authorList>
    </citation>
    <scope>NUCLEOTIDE SEQUENCE [LARGE SCALE GENOMIC DNA]</scope>
    <source>
        <strain>Berkeley</strain>
    </source>
</reference>
<reference evidence="9 11" key="3">
    <citation type="journal article" date="2002" name="Genome Biol.">
        <title>Annotation of the Drosophila melanogaster euchromatic genome: a systematic review.</title>
        <authorList>
            <person name="Misra S."/>
            <person name="Crosby M.A."/>
            <person name="Mungall C.J."/>
            <person name="Matthews B.B."/>
            <person name="Campbell K.S."/>
            <person name="Hradecky P."/>
            <person name="Huang Y."/>
            <person name="Kaminker J.S."/>
            <person name="Millburn G.H."/>
            <person name="Prochnik S.E."/>
            <person name="Smith C.D."/>
            <person name="Tupy J.L."/>
            <person name="Whitfield E.J."/>
            <person name="Bayraktaroglu L."/>
            <person name="Berman B.P."/>
            <person name="Bettencourt B.R."/>
            <person name="Celniker S.E."/>
            <person name="de Grey A.D.N.J."/>
            <person name="Drysdale R.A."/>
            <person name="Harris N.L."/>
            <person name="Richter J."/>
            <person name="Russo S."/>
            <person name="Schroeder A.J."/>
            <person name="Shu S.Q."/>
            <person name="Stapleton M."/>
            <person name="Yamada C."/>
            <person name="Ashburner M."/>
            <person name="Gelbart W.M."/>
            <person name="Rubin G.M."/>
            <person name="Lewis S.E."/>
        </authorList>
    </citation>
    <scope>GENOME REANNOTATION</scope>
    <source>
        <strain>Berkeley</strain>
    </source>
</reference>
<reference evidence="10" key="4">
    <citation type="journal article" date="2002" name="Genome Biol.">
        <title>A Drosophila full-length cDNA resource.</title>
        <authorList>
            <person name="Stapleton M."/>
            <person name="Carlson J.W."/>
            <person name="Brokstein P."/>
            <person name="Yu C."/>
            <person name="Champe M."/>
            <person name="George R.A."/>
            <person name="Guarin H."/>
            <person name="Kronmiller B."/>
            <person name="Pacleb J.M."/>
            <person name="Park S."/>
            <person name="Wan K.H."/>
            <person name="Rubin G.M."/>
            <person name="Celniker S.E."/>
        </authorList>
    </citation>
    <scope>NUCLEOTIDE SEQUENCE [LARGE SCALE MRNA]</scope>
    <source>
        <strain evidence="10">Berkeley</strain>
        <tissue evidence="4">Embryo</tissue>
    </source>
</reference>
<reference evidence="9 14" key="5">
    <citation type="submission" date="2003-04" db="EMBL/GenBank/DDBJ databases">
        <title>Escaping gene conversion: Adaptive molecular evolution of Hsp70 trans-regulators.</title>
        <authorList>
            <person name="Bettencourt B.R."/>
            <person name="Lerman D.N."/>
            <person name="Feder M.E."/>
        </authorList>
    </citation>
    <scope>NUCLEOTIDE SEQUENCE [GENOMIC DNA] OF 8-370</scope>
    <scope>VARIANTS ASN-105 AND ALA-290</scope>
    <source>
        <strain evidence="13">Canton-S</strain>
        <strain evidence="12">Oregon-R</strain>
        <strain evidence="20">XCPA102</strain>
        <strain evidence="23">XCPA105</strain>
        <strain evidence="21">XCPA112</strain>
        <strain evidence="19">XCPA118</strain>
        <strain evidence="17">XCPA122</strain>
        <strain evidence="18">XCPA125</strain>
        <strain evidence="16">XCPA4</strain>
        <strain evidence="15">XCPA51</strain>
        <strain evidence="14">XCPA7</strain>
        <strain evidence="22">XCPA77</strain>
    </source>
</reference>
<reference evidence="9" key="6">
    <citation type="journal article" date="2007" name="Mol. Biosyst.">
        <title>An integrated chemical, mass spectrometric and computational strategy for (quantitative) phosphoproteomics: application to Drosophila melanogaster Kc167 cells.</title>
        <authorList>
            <person name="Bodenmiller B."/>
            <person name="Mueller L.N."/>
            <person name="Pedrioli P.G.A."/>
            <person name="Pflieger D."/>
            <person name="Juenger M.A."/>
            <person name="Eng J.K."/>
            <person name="Aebersold R."/>
            <person name="Tao W.A."/>
        </authorList>
    </citation>
    <scope>PHOSPHORYLATION [LARGE SCALE ANALYSIS] AT SER-80</scope>
    <scope>IDENTIFICATION BY MASS SPECTROMETRY</scope>
</reference>
<name>F10A2_DROME</name>
<comment type="function">
    <text evidence="1">One HIP oligomer binds the ATPase domains of at least two Hsc70 molecules dependent on activation of the Hsc70 ATPase by Hsp40. Stabilizes the ADP state of Hsc70 that has a high affinity for substrate protein. Through its own chaperone activity, it may contribute to the interaction of Hsc70 with various target proteins (By similarity).</text>
</comment>
<comment type="subunit">
    <text evidence="1">Homotetramer. Interacts with Hsc70 as well as DNAJ homologs and Hsp90 (By similarity).</text>
</comment>
<comment type="subcellular location">
    <subcellularLocation>
        <location evidence="1">Cytoplasm</location>
    </subcellularLocation>
</comment>
<comment type="similarity">
    <text evidence="2">Belongs to the FAM10 family.</text>
</comment>
<evidence type="ECO:0000250" key="1">
    <source>
        <dbReference type="UniProtKB" id="P50503"/>
    </source>
</evidence>
<evidence type="ECO:0000255" key="2"/>
<evidence type="ECO:0000256" key="3">
    <source>
        <dbReference type="SAM" id="MobiDB-lite"/>
    </source>
</evidence>
<evidence type="ECO:0000269" key="4">
    <source>
    </source>
</evidence>
<evidence type="ECO:0000269" key="5">
    <source>
    </source>
</evidence>
<evidence type="ECO:0000269" key="6">
    <source>
    </source>
</evidence>
<evidence type="ECO:0000269" key="7">
    <source ref="5"/>
</evidence>
<evidence type="ECO:0000303" key="8">
    <source>
    </source>
</evidence>
<evidence type="ECO:0000305" key="9"/>
<evidence type="ECO:0000312" key="10">
    <source>
        <dbReference type="EMBL" id="AAK93422.1"/>
    </source>
</evidence>
<evidence type="ECO:0000312" key="11">
    <source>
        <dbReference type="EMBL" id="AAN09105.1"/>
    </source>
</evidence>
<evidence type="ECO:0000312" key="12">
    <source>
        <dbReference type="EMBL" id="AAP31292.1"/>
    </source>
</evidence>
<evidence type="ECO:0000312" key="13">
    <source>
        <dbReference type="EMBL" id="AAP31293.1"/>
    </source>
</evidence>
<evidence type="ECO:0000312" key="14">
    <source>
        <dbReference type="EMBL" id="AAP31294.1"/>
    </source>
</evidence>
<evidence type="ECO:0000312" key="15">
    <source>
        <dbReference type="EMBL" id="AAP31295.1"/>
    </source>
</evidence>
<evidence type="ECO:0000312" key="16">
    <source>
        <dbReference type="EMBL" id="AAP31296.1"/>
    </source>
</evidence>
<evidence type="ECO:0000312" key="17">
    <source>
        <dbReference type="EMBL" id="AAP31297.1"/>
    </source>
</evidence>
<evidence type="ECO:0000312" key="18">
    <source>
        <dbReference type="EMBL" id="AAP31298.1"/>
    </source>
</evidence>
<evidence type="ECO:0000312" key="19">
    <source>
        <dbReference type="EMBL" id="AAP31299.1"/>
    </source>
</evidence>
<evidence type="ECO:0000312" key="20">
    <source>
        <dbReference type="EMBL" id="AAP31300.1"/>
    </source>
</evidence>
<evidence type="ECO:0000312" key="21">
    <source>
        <dbReference type="EMBL" id="AAP31301.1"/>
    </source>
</evidence>
<evidence type="ECO:0000312" key="22">
    <source>
        <dbReference type="EMBL" id="AAP31302.1"/>
    </source>
</evidence>
<evidence type="ECO:0000312" key="23">
    <source>
        <dbReference type="EMBL" id="AAP31303.1"/>
    </source>
</evidence>
<evidence type="ECO:0000312" key="24">
    <source>
        <dbReference type="EMBL" id="ACN78889.1"/>
    </source>
</evidence>
<evidence type="ECO:0000312" key="25">
    <source>
        <dbReference type="EMBL" id="ACN78890.1"/>
    </source>
</evidence>
<evidence type="ECO:0000312" key="26">
    <source>
        <dbReference type="EMBL" id="ACN78891.1"/>
    </source>
</evidence>
<evidence type="ECO:0000312" key="27">
    <source>
        <dbReference type="EMBL" id="ACN78892.1"/>
    </source>
</evidence>
<evidence type="ECO:0000312" key="28">
    <source>
        <dbReference type="EMBL" id="ACN78893.1"/>
    </source>
</evidence>
<evidence type="ECO:0000312" key="29">
    <source>
        <dbReference type="EMBL" id="ACN78894.1"/>
    </source>
</evidence>
<evidence type="ECO:0000312" key="30">
    <source>
        <dbReference type="EMBL" id="ACN78895.1"/>
    </source>
</evidence>
<evidence type="ECO:0000312" key="31">
    <source>
        <dbReference type="EMBL" id="ACN78896.1"/>
    </source>
</evidence>
<accession>Q86DS1</accession>
<accession>C0L9I4</accession>
<accession>C0L9I8</accession>
<accession>Q86DR2</accession>
<accession>Q86DR3</accession>
<accession>Q86DR4</accession>
<accession>Q86DR5</accession>
<accession>Q86DR6</accession>
<accession>Q86DR7</accession>
<accession>Q86DR8</accession>
<accession>Q86DR9</accession>
<accession>Q86DS0</accession>
<accession>Q86DS2</accession>
<accession>Q86DS3</accession>
<accession>Q8IRT4</accession>